<feature type="chain" id="PRO_0000406359" description="4-hydroxyphenylalkanoate adenylyltransferase">
    <location>
        <begin position="1"/>
        <end position="622"/>
    </location>
</feature>
<sequence>MIMDTNAVSFRARDEVTTQLAPGTGGQAVPTSNGMMTRFAMSESSLTDLLHKAATQYPNRAAYKFIDYDVNPDGFTETLTWWQIYRRAKIVAEELRGYGASGDRVAVLAPQGLEYIIAFLGVLEAGLIAVPLPVPQFGIHDERISAALQDSTPSVILTTSPVIDEVTKYAPHARAGQGGTPIVVAVDLLDLDSARELDLTPPAHSSTAYLQYTSGSTRSPAGVVLSHKNVITNCVQLMSDYLGETEKVPSTAVSWLPFYHDMGLMLGIILPMINQDTAVLLNPMAFLQRPARWMQLMGKFRGQISCAPNFGFELAVRRTSDEDMAGLDLGHVRGIGSGAERVNPATLQRFIDRFAPFNLRDTAIRPSYGLAEATVFVATAEPGRPPRSVNFDYQSLSVGRVERCANEADDGAKLVSYGSSWTSEVRIVDPEARTECPAGTVGEIWVQGDNVAMGYWRNPQLTERTFDAKLTDPSPGTSIGPWLRTGDLGVMFEGELFITGRIKDLLIVDGSNHYPDDIESTIQEITGGRVVAIAVPDADGEKLVTIVEFASWGHSGQEAIDKLRSVKREITSAISRAHRVRVADVVLVATGSIPVTTSGKVRRSSCAERYRNDGFTRLDRSA</sequence>
<reference key="1">
    <citation type="journal article" date="2008" name="Genome Res.">
        <title>Insights from the complete genome sequence of Mycobacterium marinum on the evolution of Mycobacterium tuberculosis.</title>
        <authorList>
            <person name="Stinear T.P."/>
            <person name="Seemann T."/>
            <person name="Harrison P.F."/>
            <person name="Jenkin G.A."/>
            <person name="Davies J.K."/>
            <person name="Johnson P.D."/>
            <person name="Abdellah Z."/>
            <person name="Arrowsmith C."/>
            <person name="Chillingworth T."/>
            <person name="Churcher C."/>
            <person name="Clarke K."/>
            <person name="Cronin A."/>
            <person name="Davis P."/>
            <person name="Goodhead I."/>
            <person name="Holroyd N."/>
            <person name="Jagels K."/>
            <person name="Lord A."/>
            <person name="Moule S."/>
            <person name="Mungall K."/>
            <person name="Norbertczak H."/>
            <person name="Quail M.A."/>
            <person name="Rabbinowitsch E."/>
            <person name="Walker D."/>
            <person name="White B."/>
            <person name="Whitehead S."/>
            <person name="Small P.L."/>
            <person name="Brosch R."/>
            <person name="Ramakrishnan L."/>
            <person name="Fischbach M.A."/>
            <person name="Parkhill J."/>
            <person name="Cole S.T."/>
        </authorList>
    </citation>
    <scope>NUCLEOTIDE SEQUENCE [LARGE SCALE GENOMIC DNA]</scope>
    <source>
        <strain>ATCC BAA-535 / M</strain>
    </source>
</reference>
<reference key="2">
    <citation type="journal article" date="2015" name="J. Bacteriol.">
        <title>Biosynthesis of cell envelope-associated phenolic glycolipids in Mycobacterium marinum.</title>
        <authorList>
            <person name="Vergnolle O."/>
            <person name="Chavadi S.S."/>
            <person name="Edupuganti U.R."/>
            <person name="Mohandas P."/>
            <person name="Chan C."/>
            <person name="Zeng J."/>
            <person name="Kopylov M."/>
            <person name="Angelo N.G."/>
            <person name="Warren J.D."/>
            <person name="Soll C.E."/>
            <person name="Quadri L.E."/>
        </authorList>
    </citation>
    <scope>FUNCTION</scope>
    <scope>CATALYTIC ACTIVITY</scope>
    <scope>DISRUPTION PHENOTYPE</scope>
    <source>
        <strain>ATCC BAA-535 / M</strain>
    </source>
</reference>
<accession>B2HIL4</accession>
<proteinExistence type="evidence at protein level"/>
<dbReference type="EC" id="6.2.1.51" evidence="3"/>
<dbReference type="EMBL" id="CP000854">
    <property type="protein sequence ID" value="ACC40208.1"/>
    <property type="molecule type" value="Genomic_DNA"/>
</dbReference>
<dbReference type="SMR" id="B2HIL4"/>
<dbReference type="STRING" id="216594.MMAR_1759"/>
<dbReference type="KEGG" id="mmi:MMAR_1759"/>
<dbReference type="eggNOG" id="COG0318">
    <property type="taxonomic scope" value="Bacteria"/>
</dbReference>
<dbReference type="HOGENOM" id="CLU_000022_23_7_11"/>
<dbReference type="BRENDA" id="6.2.1.51">
    <property type="organism ID" value="3506"/>
</dbReference>
<dbReference type="UniPathway" id="UPA00094"/>
<dbReference type="Proteomes" id="UP000001190">
    <property type="component" value="Chromosome"/>
</dbReference>
<dbReference type="GO" id="GO:0005886">
    <property type="term" value="C:plasma membrane"/>
    <property type="evidence" value="ECO:0007669"/>
    <property type="project" value="TreeGrafter"/>
</dbReference>
<dbReference type="GO" id="GO:0070566">
    <property type="term" value="F:adenylyltransferase activity"/>
    <property type="evidence" value="ECO:0007669"/>
    <property type="project" value="TreeGrafter"/>
</dbReference>
<dbReference type="GO" id="GO:0005524">
    <property type="term" value="F:ATP binding"/>
    <property type="evidence" value="ECO:0007669"/>
    <property type="project" value="UniProtKB-KW"/>
</dbReference>
<dbReference type="GO" id="GO:0016874">
    <property type="term" value="F:ligase activity"/>
    <property type="evidence" value="ECO:0007669"/>
    <property type="project" value="UniProtKB-KW"/>
</dbReference>
<dbReference type="GO" id="GO:0071766">
    <property type="term" value="P:Actinobacterium-type cell wall biogenesis"/>
    <property type="evidence" value="ECO:0000250"/>
    <property type="project" value="UniProtKB"/>
</dbReference>
<dbReference type="GO" id="GO:0006633">
    <property type="term" value="P:fatty acid biosynthetic process"/>
    <property type="evidence" value="ECO:0007669"/>
    <property type="project" value="UniProtKB-UniPathway"/>
</dbReference>
<dbReference type="GO" id="GO:0008610">
    <property type="term" value="P:lipid biosynthetic process"/>
    <property type="evidence" value="ECO:0000250"/>
    <property type="project" value="UniProtKB"/>
</dbReference>
<dbReference type="CDD" id="cd05931">
    <property type="entry name" value="FAAL"/>
    <property type="match status" value="1"/>
</dbReference>
<dbReference type="FunFam" id="3.30.300.30:FF:000016">
    <property type="entry name" value="Fatty-acid-CoA ligase FadD26"/>
    <property type="match status" value="1"/>
</dbReference>
<dbReference type="FunFam" id="3.40.50.12780:FF:000013">
    <property type="entry name" value="Long-chain-fatty-acid--AMP ligase FadD32"/>
    <property type="match status" value="1"/>
</dbReference>
<dbReference type="Gene3D" id="3.30.300.30">
    <property type="match status" value="1"/>
</dbReference>
<dbReference type="Gene3D" id="3.40.50.12780">
    <property type="entry name" value="N-terminal domain of ligase-like"/>
    <property type="match status" value="1"/>
</dbReference>
<dbReference type="InterPro" id="IPR025110">
    <property type="entry name" value="AMP-bd_C"/>
</dbReference>
<dbReference type="InterPro" id="IPR045851">
    <property type="entry name" value="AMP-bd_C_sf"/>
</dbReference>
<dbReference type="InterPro" id="IPR000873">
    <property type="entry name" value="AMP-dep_synth/lig_dom"/>
</dbReference>
<dbReference type="InterPro" id="IPR042099">
    <property type="entry name" value="ANL_N_sf"/>
</dbReference>
<dbReference type="InterPro" id="IPR040097">
    <property type="entry name" value="FAAL/FAAC"/>
</dbReference>
<dbReference type="NCBIfam" id="NF004509">
    <property type="entry name" value="PRK05850.1"/>
    <property type="match status" value="1"/>
</dbReference>
<dbReference type="PANTHER" id="PTHR22754:SF32">
    <property type="entry name" value="DISCO-INTERACTING PROTEIN 2"/>
    <property type="match status" value="1"/>
</dbReference>
<dbReference type="PANTHER" id="PTHR22754">
    <property type="entry name" value="DISCO-INTERACTING PROTEIN 2 DIP2 -RELATED"/>
    <property type="match status" value="1"/>
</dbReference>
<dbReference type="Pfam" id="PF00501">
    <property type="entry name" value="AMP-binding"/>
    <property type="match status" value="1"/>
</dbReference>
<dbReference type="Pfam" id="PF23024">
    <property type="entry name" value="AMP-dom_DIP2-like"/>
    <property type="match status" value="1"/>
</dbReference>
<dbReference type="SUPFAM" id="SSF56801">
    <property type="entry name" value="Acetyl-CoA synthetase-like"/>
    <property type="match status" value="1"/>
</dbReference>
<gene>
    <name type="primary">fadD29</name>
    <name type="ordered locus">MMAR_1759</name>
</gene>
<keyword id="KW-0067">ATP-binding</keyword>
<keyword id="KW-0276">Fatty acid metabolism</keyword>
<keyword id="KW-0436">Ligase</keyword>
<keyword id="KW-0443">Lipid metabolism</keyword>
<keyword id="KW-0547">Nucleotide-binding</keyword>
<keyword id="KW-1185">Reference proteome</keyword>
<name>FAA29_MYCMM</name>
<evidence type="ECO:0000269" key="1">
    <source>
    </source>
</evidence>
<evidence type="ECO:0000305" key="2"/>
<evidence type="ECO:0000305" key="3">
    <source>
    </source>
</evidence>
<comment type="function">
    <text evidence="1">Catalyzes the activation of long-chain fatty acids as acyl-adenylates (acyl-AMP), which are then transferred to the multifunctional polyketide synthase PpsA for further chain extension. Involved in the biosynthesis of phenolphthiocerol, which is an important intermediate in the biosynthesis of phenolic glycolipid (PGL), also called mycosid B.</text>
</comment>
<comment type="catalytic activity">
    <reaction evidence="3">
        <text>17-(4-hydroxyphenyl)heptadecanoate + holo-[(phenol)carboxyphthiodiolenone synthase] + ATP = 17-(4-hydroxyphenyl)heptadecanoyl-[(phenol)carboxyphthiodiolenone synthase] + AMP + diphosphate</text>
        <dbReference type="Rhea" id="RHEA:55720"/>
        <dbReference type="Rhea" id="RHEA-COMP:14271"/>
        <dbReference type="Rhea" id="RHEA-COMP:14272"/>
        <dbReference type="ChEBI" id="CHEBI:30616"/>
        <dbReference type="ChEBI" id="CHEBI:33019"/>
        <dbReference type="ChEBI" id="CHEBI:64479"/>
        <dbReference type="ChEBI" id="CHEBI:91233"/>
        <dbReference type="ChEBI" id="CHEBI:133300"/>
        <dbReference type="ChEBI" id="CHEBI:456215"/>
        <dbReference type="EC" id="6.2.1.51"/>
    </reaction>
</comment>
<comment type="catalytic activity">
    <reaction evidence="3">
        <text>19-(4-hydroxyphenyl)nonadecanoate + holo-[(phenol)carboxyphthiodiolenone synthase] + ATP = 19-(4-hydroxyphenyl)nonadecanoyl-[(phenol)carboxyphthiodiolenone synthase] + AMP + diphosphate</text>
        <dbReference type="Rhea" id="RHEA:55728"/>
        <dbReference type="Rhea" id="RHEA-COMP:14271"/>
        <dbReference type="Rhea" id="RHEA-COMP:14273"/>
        <dbReference type="ChEBI" id="CHEBI:30616"/>
        <dbReference type="ChEBI" id="CHEBI:33019"/>
        <dbReference type="ChEBI" id="CHEBI:64479"/>
        <dbReference type="ChEBI" id="CHEBI:91236"/>
        <dbReference type="ChEBI" id="CHEBI:133301"/>
        <dbReference type="ChEBI" id="CHEBI:456215"/>
        <dbReference type="EC" id="6.2.1.51"/>
    </reaction>
</comment>
<comment type="pathway">
    <text>Lipid metabolism; fatty acid biosynthesis.</text>
</comment>
<comment type="disruption phenotype">
    <text evidence="1">Deletion of the gene leads to selective loss of phenolic glycolipids (PGL).</text>
</comment>
<comment type="similarity">
    <text evidence="2">Belongs to the ATP-dependent AMP-binding enzyme family.</text>
</comment>
<protein>
    <recommendedName>
        <fullName>4-hydroxyphenylalkanoate adenylyltransferase</fullName>
        <ecNumber evidence="3">6.2.1.51</ecNumber>
    </recommendedName>
    <alternativeName>
        <fullName>Acyl-AMP synthase</fullName>
    </alternativeName>
    <alternativeName>
        <fullName>Long-chain-fatty-acid--AMP ligase FadD29</fullName>
        <shortName>FAAL</shortName>
    </alternativeName>
</protein>
<organism>
    <name type="scientific">Mycobacterium marinum (strain ATCC BAA-535 / M)</name>
    <dbReference type="NCBI Taxonomy" id="216594"/>
    <lineage>
        <taxon>Bacteria</taxon>
        <taxon>Bacillati</taxon>
        <taxon>Actinomycetota</taxon>
        <taxon>Actinomycetes</taxon>
        <taxon>Mycobacteriales</taxon>
        <taxon>Mycobacteriaceae</taxon>
        <taxon>Mycobacterium</taxon>
        <taxon>Mycobacterium ulcerans group</taxon>
    </lineage>
</organism>